<sequence>MRDETPEQPAPLRFGYTTGSCATATSLAAARLLLTGHADDAVEIVLPKGQRVMMRLEFCRTTADGAEAGTIKDAGDDPDVTHGALIFARVARAAAPGVRFHAGPGVGTVTRAGLTLPVGEPAINPVPRQMMTTHLEALAAEHGYAGGFDVTIGVEGGEALALKTMNPRLGIVGGLSILGTTGIVRPFSCSAYIASIHQGIDVARANGITHIAACTGNASEDAMRAHYQLPDMALIEMGDFAGAVLKHLRRAPVARLSMCGGFGKLSKLAAGHLDLHSRHSSIDLPLLAQWAAEAGASDALQAAMRAANTSQEALKLAQADAVPLGDLVCAHALQVARDIVPPSVAVEMFAIDRQGRFVGAAR</sequence>
<proteinExistence type="inferred from homology"/>
<dbReference type="EC" id="2.1.1.195" evidence="1"/>
<dbReference type="EMBL" id="AM747720">
    <property type="protein sequence ID" value="CAR52027.1"/>
    <property type="molecule type" value="Genomic_DNA"/>
</dbReference>
<dbReference type="RefSeq" id="WP_006484852.1">
    <property type="nucleotide sequence ID" value="NC_011000.1"/>
</dbReference>
<dbReference type="SMR" id="B4E9C7"/>
<dbReference type="KEGG" id="bcj:BCAL1728"/>
<dbReference type="eggNOG" id="COG1903">
    <property type="taxonomic scope" value="Bacteria"/>
</dbReference>
<dbReference type="HOGENOM" id="CLU_041273_0_0_4"/>
<dbReference type="BioCyc" id="BCEN216591:G1G1V-1912-MONOMER"/>
<dbReference type="UniPathway" id="UPA00148">
    <property type="reaction ID" value="UER00227"/>
</dbReference>
<dbReference type="Proteomes" id="UP000001035">
    <property type="component" value="Chromosome 1"/>
</dbReference>
<dbReference type="GO" id="GO:0043780">
    <property type="term" value="F:cobalt-precorrin-5B C1-methyltransferase activity"/>
    <property type="evidence" value="ECO:0007669"/>
    <property type="project" value="RHEA"/>
</dbReference>
<dbReference type="GO" id="GO:0019251">
    <property type="term" value="P:anaerobic cobalamin biosynthetic process"/>
    <property type="evidence" value="ECO:0007669"/>
    <property type="project" value="UniProtKB-UniRule"/>
</dbReference>
<dbReference type="GO" id="GO:0032259">
    <property type="term" value="P:methylation"/>
    <property type="evidence" value="ECO:0007669"/>
    <property type="project" value="UniProtKB-KW"/>
</dbReference>
<dbReference type="Gene3D" id="3.30.2110.10">
    <property type="entry name" value="CbiD-like"/>
    <property type="match status" value="1"/>
</dbReference>
<dbReference type="HAMAP" id="MF_00787">
    <property type="entry name" value="CbiD"/>
    <property type="match status" value="1"/>
</dbReference>
<dbReference type="InterPro" id="IPR002748">
    <property type="entry name" value="CbiD"/>
</dbReference>
<dbReference type="InterPro" id="IPR036074">
    <property type="entry name" value="CbiD_sf"/>
</dbReference>
<dbReference type="NCBIfam" id="TIGR00312">
    <property type="entry name" value="cbiD"/>
    <property type="match status" value="1"/>
</dbReference>
<dbReference type="NCBIfam" id="NF000849">
    <property type="entry name" value="PRK00075.1-1"/>
    <property type="match status" value="1"/>
</dbReference>
<dbReference type="PANTHER" id="PTHR35863">
    <property type="entry name" value="COBALT-PRECORRIN-5B C(1)-METHYLTRANSFERASE"/>
    <property type="match status" value="1"/>
</dbReference>
<dbReference type="PANTHER" id="PTHR35863:SF1">
    <property type="entry name" value="COBALT-PRECORRIN-5B C(1)-METHYLTRANSFERASE"/>
    <property type="match status" value="1"/>
</dbReference>
<dbReference type="Pfam" id="PF01888">
    <property type="entry name" value="CbiD"/>
    <property type="match status" value="1"/>
</dbReference>
<dbReference type="PIRSF" id="PIRSF026782">
    <property type="entry name" value="CbiD"/>
    <property type="match status" value="1"/>
</dbReference>
<dbReference type="SUPFAM" id="SSF111342">
    <property type="entry name" value="CbiD-like"/>
    <property type="match status" value="1"/>
</dbReference>
<name>CBID_BURCJ</name>
<accession>B4E9C7</accession>
<feature type="chain" id="PRO_1000133729" description="Cobalt-precorrin-5B C(1)-methyltransferase">
    <location>
        <begin position="1"/>
        <end position="362"/>
    </location>
</feature>
<reference key="1">
    <citation type="journal article" date="2009" name="J. Bacteriol.">
        <title>The genome of Burkholderia cenocepacia J2315, an epidemic pathogen of cystic fibrosis patients.</title>
        <authorList>
            <person name="Holden M.T."/>
            <person name="Seth-Smith H.M."/>
            <person name="Crossman L.C."/>
            <person name="Sebaihia M."/>
            <person name="Bentley S.D."/>
            <person name="Cerdeno-Tarraga A.M."/>
            <person name="Thomson N.R."/>
            <person name="Bason N."/>
            <person name="Quail M.A."/>
            <person name="Sharp S."/>
            <person name="Cherevach I."/>
            <person name="Churcher C."/>
            <person name="Goodhead I."/>
            <person name="Hauser H."/>
            <person name="Holroyd N."/>
            <person name="Mungall K."/>
            <person name="Scott P."/>
            <person name="Walker D."/>
            <person name="White B."/>
            <person name="Rose H."/>
            <person name="Iversen P."/>
            <person name="Mil-Homens D."/>
            <person name="Rocha E.P."/>
            <person name="Fialho A.M."/>
            <person name="Baldwin A."/>
            <person name="Dowson C."/>
            <person name="Barrell B.G."/>
            <person name="Govan J.R."/>
            <person name="Vandamme P."/>
            <person name="Hart C.A."/>
            <person name="Mahenthiralingam E."/>
            <person name="Parkhill J."/>
        </authorList>
    </citation>
    <scope>NUCLEOTIDE SEQUENCE [LARGE SCALE GENOMIC DNA]</scope>
    <source>
        <strain>ATCC BAA-245 / DSM 16553 / LMG 16656 / NCTC 13227 / J2315 / CF5610</strain>
    </source>
</reference>
<organism>
    <name type="scientific">Burkholderia cenocepacia (strain ATCC BAA-245 / DSM 16553 / LMG 16656 / NCTC 13227 / J2315 / CF5610)</name>
    <name type="common">Burkholderia cepacia (strain J2315)</name>
    <dbReference type="NCBI Taxonomy" id="216591"/>
    <lineage>
        <taxon>Bacteria</taxon>
        <taxon>Pseudomonadati</taxon>
        <taxon>Pseudomonadota</taxon>
        <taxon>Betaproteobacteria</taxon>
        <taxon>Burkholderiales</taxon>
        <taxon>Burkholderiaceae</taxon>
        <taxon>Burkholderia</taxon>
        <taxon>Burkholderia cepacia complex</taxon>
    </lineage>
</organism>
<evidence type="ECO:0000255" key="1">
    <source>
        <dbReference type="HAMAP-Rule" id="MF_00787"/>
    </source>
</evidence>
<gene>
    <name evidence="1" type="primary">cbiD</name>
    <name type="ordered locus">BceJ2315_16910</name>
    <name type="ORF">BCAL1728</name>
</gene>
<keyword id="KW-0169">Cobalamin biosynthesis</keyword>
<keyword id="KW-0489">Methyltransferase</keyword>
<keyword id="KW-0949">S-adenosyl-L-methionine</keyword>
<keyword id="KW-0808">Transferase</keyword>
<protein>
    <recommendedName>
        <fullName evidence="1">Cobalt-precorrin-5B C(1)-methyltransferase</fullName>
        <ecNumber evidence="1">2.1.1.195</ecNumber>
    </recommendedName>
    <alternativeName>
        <fullName evidence="1">Cobalt-precorrin-6A synthase</fullName>
    </alternativeName>
</protein>
<comment type="function">
    <text evidence="1">Catalyzes the methylation of C-1 in cobalt-precorrin-5B to form cobalt-precorrin-6A.</text>
</comment>
<comment type="catalytic activity">
    <reaction evidence="1">
        <text>Co-precorrin-5B + S-adenosyl-L-methionine = Co-precorrin-6A + S-adenosyl-L-homocysteine</text>
        <dbReference type="Rhea" id="RHEA:26285"/>
        <dbReference type="ChEBI" id="CHEBI:57856"/>
        <dbReference type="ChEBI" id="CHEBI:59789"/>
        <dbReference type="ChEBI" id="CHEBI:60063"/>
        <dbReference type="ChEBI" id="CHEBI:60064"/>
        <dbReference type="EC" id="2.1.1.195"/>
    </reaction>
</comment>
<comment type="pathway">
    <text evidence="1">Cofactor biosynthesis; adenosylcobalamin biosynthesis; cob(II)yrinate a,c-diamide from sirohydrochlorin (anaerobic route): step 6/10.</text>
</comment>
<comment type="similarity">
    <text evidence="1">Belongs to the CbiD family.</text>
</comment>